<protein>
    <recommendedName>
        <fullName evidence="1">Protein TusB</fullName>
    </recommendedName>
    <alternativeName>
        <fullName evidence="1">tRNA 2-thiouridine synthesizing protein B</fullName>
    </alternativeName>
</protein>
<sequence>MLYTVSHSPYHCDLSALLRLATSEDDILLLQDGVIAALKESETLKLLLNNPASLFVLEDDVIARGLVGQISDNATLISYTHFVDLTLRHQQQLAW</sequence>
<name>TUSB_YERPN</name>
<gene>
    <name evidence="1" type="primary">tusB</name>
    <name type="ordered locus">YPN_3868</name>
    <name type="ORF">YP516_4393</name>
</gene>
<proteinExistence type="inferred from homology"/>
<keyword id="KW-0963">Cytoplasm</keyword>
<keyword id="KW-0819">tRNA processing</keyword>
<feature type="chain" id="PRO_1000069065" description="Protein TusB">
    <location>
        <begin position="1"/>
        <end position="95"/>
    </location>
</feature>
<organism>
    <name type="scientific">Yersinia pestis bv. Antiqua (strain Nepal516)</name>
    <dbReference type="NCBI Taxonomy" id="377628"/>
    <lineage>
        <taxon>Bacteria</taxon>
        <taxon>Pseudomonadati</taxon>
        <taxon>Pseudomonadota</taxon>
        <taxon>Gammaproteobacteria</taxon>
        <taxon>Enterobacterales</taxon>
        <taxon>Yersiniaceae</taxon>
        <taxon>Yersinia</taxon>
    </lineage>
</organism>
<dbReference type="EMBL" id="CP000305">
    <property type="protein sequence ID" value="ABG20195.1"/>
    <property type="molecule type" value="Genomic_DNA"/>
</dbReference>
<dbReference type="EMBL" id="ACNQ01000019">
    <property type="protein sequence ID" value="EEO74783.1"/>
    <property type="molecule type" value="Genomic_DNA"/>
</dbReference>
<dbReference type="RefSeq" id="WP_002212322.1">
    <property type="nucleotide sequence ID" value="NZ_ACNQ01000019.1"/>
</dbReference>
<dbReference type="SMR" id="Q1CCT5"/>
<dbReference type="GeneID" id="57974404"/>
<dbReference type="KEGG" id="ypn:YPN_3868"/>
<dbReference type="HOGENOM" id="CLU_166087_2_1_6"/>
<dbReference type="Proteomes" id="UP000008936">
    <property type="component" value="Chromosome"/>
</dbReference>
<dbReference type="GO" id="GO:1990228">
    <property type="term" value="C:sulfurtransferase complex"/>
    <property type="evidence" value="ECO:0007669"/>
    <property type="project" value="TreeGrafter"/>
</dbReference>
<dbReference type="GO" id="GO:0002143">
    <property type="term" value="P:tRNA wobble position uridine thiolation"/>
    <property type="evidence" value="ECO:0007669"/>
    <property type="project" value="InterPro"/>
</dbReference>
<dbReference type="FunFam" id="3.40.1260.10:FF:000002">
    <property type="entry name" value="Sulfurtransferase TusB"/>
    <property type="match status" value="1"/>
</dbReference>
<dbReference type="Gene3D" id="3.40.1260.10">
    <property type="entry name" value="DsrEFH-like"/>
    <property type="match status" value="1"/>
</dbReference>
<dbReference type="HAMAP" id="MF_01564">
    <property type="entry name" value="Thiourid_synth_B"/>
    <property type="match status" value="1"/>
</dbReference>
<dbReference type="InterPro" id="IPR027396">
    <property type="entry name" value="DsrEFH-like"/>
</dbReference>
<dbReference type="InterPro" id="IPR023526">
    <property type="entry name" value="Sulphur_relay_TusB"/>
</dbReference>
<dbReference type="InterPro" id="IPR007215">
    <property type="entry name" value="Sulphur_relay_TusB/DsrH"/>
</dbReference>
<dbReference type="NCBIfam" id="NF010035">
    <property type="entry name" value="PRK13510.1"/>
    <property type="match status" value="1"/>
</dbReference>
<dbReference type="NCBIfam" id="TIGR03011">
    <property type="entry name" value="sulf_tusB_dsrH"/>
    <property type="match status" value="1"/>
</dbReference>
<dbReference type="PANTHER" id="PTHR37526">
    <property type="entry name" value="PROTEIN TUSB"/>
    <property type="match status" value="1"/>
</dbReference>
<dbReference type="PANTHER" id="PTHR37526:SF1">
    <property type="entry name" value="PROTEIN TUSB"/>
    <property type="match status" value="1"/>
</dbReference>
<dbReference type="Pfam" id="PF04077">
    <property type="entry name" value="DsrH"/>
    <property type="match status" value="1"/>
</dbReference>
<dbReference type="SUPFAM" id="SSF75169">
    <property type="entry name" value="DsrEFH-like"/>
    <property type="match status" value="1"/>
</dbReference>
<accession>Q1CCT5</accession>
<accession>D1Q2N0</accession>
<comment type="function">
    <text evidence="1">Part of a sulfur-relay system required for 2-thiolation of 5-methylaminomethyl-2-thiouridine (mnm(5)s(2)U) at tRNA wobble positions.</text>
</comment>
<comment type="subunit">
    <text evidence="1">Heterohexamer, formed by a dimer of trimers. The hexameric TusBCD complex contains 2 copies each of TusB, TusC and TusD. The TusBCD complex interacts with TusE.</text>
</comment>
<comment type="subcellular location">
    <subcellularLocation>
        <location evidence="1">Cytoplasm</location>
    </subcellularLocation>
</comment>
<comment type="similarity">
    <text evidence="1">Belongs to the DsrH/TusB family.</text>
</comment>
<reference key="1">
    <citation type="journal article" date="2006" name="J. Bacteriol.">
        <title>Complete genome sequence of Yersinia pestis strains Antiqua and Nepal516: evidence of gene reduction in an emerging pathogen.</title>
        <authorList>
            <person name="Chain P.S.G."/>
            <person name="Hu P."/>
            <person name="Malfatti S.A."/>
            <person name="Radnedge L."/>
            <person name="Larimer F."/>
            <person name="Vergez L.M."/>
            <person name="Worsham P."/>
            <person name="Chu M.C."/>
            <person name="Andersen G.L."/>
        </authorList>
    </citation>
    <scope>NUCLEOTIDE SEQUENCE [LARGE SCALE GENOMIC DNA]</scope>
    <source>
        <strain>Nepal516</strain>
    </source>
</reference>
<reference key="2">
    <citation type="submission" date="2009-04" db="EMBL/GenBank/DDBJ databases">
        <title>Yersinia pestis Nepal516A whole genome shotgun sequencing project.</title>
        <authorList>
            <person name="Plunkett G. III"/>
            <person name="Anderson B.D."/>
            <person name="Baumler D.J."/>
            <person name="Burland V."/>
            <person name="Cabot E.L."/>
            <person name="Glasner J.D."/>
            <person name="Mau B."/>
            <person name="Neeno-Eckwall E."/>
            <person name="Perna N.T."/>
            <person name="Munk A.C."/>
            <person name="Tapia R."/>
            <person name="Green L.D."/>
            <person name="Rogers Y.C."/>
            <person name="Detter J.C."/>
            <person name="Bruce D.C."/>
            <person name="Brettin T.S."/>
        </authorList>
    </citation>
    <scope>NUCLEOTIDE SEQUENCE [LARGE SCALE GENOMIC DNA]</scope>
    <source>
        <strain>Nepal516</strain>
    </source>
</reference>
<evidence type="ECO:0000255" key="1">
    <source>
        <dbReference type="HAMAP-Rule" id="MF_01564"/>
    </source>
</evidence>